<evidence type="ECO:0000250" key="1">
    <source>
        <dbReference type="UniProtKB" id="A9SY64"/>
    </source>
</evidence>
<evidence type="ECO:0000250" key="2">
    <source>
        <dbReference type="UniProtKB" id="O23680"/>
    </source>
</evidence>
<evidence type="ECO:0000255" key="3"/>
<evidence type="ECO:0000255" key="4">
    <source>
        <dbReference type="PROSITE-ProRule" id="PRU01057"/>
    </source>
</evidence>
<evidence type="ECO:0000256" key="5">
    <source>
        <dbReference type="SAM" id="MobiDB-lite"/>
    </source>
</evidence>
<evidence type="ECO:0000305" key="6"/>
<evidence type="ECO:0000312" key="7">
    <source>
        <dbReference type="EMBL" id="EDQ63891.1"/>
    </source>
</evidence>
<sequence length="994" mass="108396">MAELEKLAAARLEKEASNNTVNPVREVSEDDVKDVSGETTVVTTSISEGANESLSKKEDEPALIGSNVPEELEGNSLEVQSAITTDLEKVSSTPTPSNAEKESPEATEVRIVEEGKLEKADPSVVNEELSKEILEDPEVVPSPAKMYTALKAVDGDMPVLKSENGNDGDTDANTADEDNENDEDDVDEDEDEDDADMDTAKALAELAMTAGKSGNPAFSGTKPSMGAAGPSLPSLPQRPAVRKPIAATASDSPGRNTQRPNGALSTQITSTTDESASSDAAEGDETREKLQNIRVKFLRLAHRLGQSPQNVVVAQVLYRLGLAESLRGGSAPNRSGAFSFDRANALAEEQEAANQEEELDFACTILVLGKTGVGKSSTINSIFDERKSVTSAFKPSTNKVQEVIGTVHGIKVRVIDTPGLLPSVADQQHNERIMGQVKKYIKKASPDIVLYFDRLDMQSRDFGDLPLLRTITDLFGAAVWFNAIVVLTHASSAPPDGPNGVPLSYEMFVAQRSHVVQQTIRQAAGDMRLMNPVSLVENHPACRTNRTGQRVLPNGQIWKPQLLLLCFASKILAEANSLLKLQETTAPGRPFGQRSRVPPLPFLLSSLLQSRAQLKLPDEQAGESDESDDDEEEEDSDADDYDELPPFRPLSKEELEDLTKEQREDYMEELADRERMFQKKQYREEIRRRKEAKKRQAQMSKEELAEAEEAEDEAGNAAAVPVPMPDMALPPSFDSDNPTHRYRYLETANQWLVRPVLETHGWDHDAGYDGFNVEKMFVVKEKIPASVSGQVTKDKKEAQVNFEAAASLRHGEGKVTLTGFDVQTIGKDLAYTVRAETRFNNFKRNKTTAGVTATYLNDTIAAGVKLEDRVLIGKRVKLVVNGGVLTGKGDKAYGGSLEATLRGKEYPLSRTLSTLGLSVMDWHGDLAIGGNLQSQFMVGKTMMVGRANLNNRGSGQVSIRASSSEQLQMVLIGIVPILRSLINCRFGFGGQSQQ</sequence>
<feature type="chain" id="PRO_0000451562" description="Translocase of chloroplast 108, chloroplastic">
    <location>
        <begin position="1"/>
        <end position="994"/>
    </location>
</feature>
<feature type="transmembrane region" description="Helical" evidence="3">
    <location>
        <begin position="969"/>
        <end position="989"/>
    </location>
</feature>
<feature type="domain" description="AIG1-type G" evidence="4">
    <location>
        <begin position="360"/>
        <end position="589"/>
    </location>
</feature>
<feature type="region of interest" description="Disordered" evidence="5">
    <location>
        <begin position="14"/>
        <end position="61"/>
    </location>
</feature>
<feature type="region of interest" description="Disordered" evidence="5">
    <location>
        <begin position="84"/>
        <end position="124"/>
    </location>
</feature>
<feature type="region of interest" description="Disordered" evidence="5">
    <location>
        <begin position="152"/>
        <end position="287"/>
    </location>
</feature>
<feature type="region of interest" description="G1" evidence="4">
    <location>
        <begin position="369"/>
        <end position="376"/>
    </location>
</feature>
<feature type="region of interest" description="G2" evidence="4">
    <location>
        <begin position="395"/>
        <end position="399"/>
    </location>
</feature>
<feature type="region of interest" description="G3" evidence="4">
    <location>
        <begin position="416"/>
        <end position="419"/>
    </location>
</feature>
<feature type="region of interest" description="G4" evidence="4">
    <location>
        <begin position="488"/>
        <end position="491"/>
    </location>
</feature>
<feature type="region of interest" description="G5" evidence="4">
    <location>
        <begin position="537"/>
        <end position="539"/>
    </location>
</feature>
<feature type="region of interest" description="Disordered" evidence="5">
    <location>
        <begin position="616"/>
        <end position="659"/>
    </location>
</feature>
<feature type="region of interest" description="Disordered" evidence="5">
    <location>
        <begin position="691"/>
        <end position="716"/>
    </location>
</feature>
<feature type="compositionally biased region" description="Polar residues" evidence="5">
    <location>
        <begin position="37"/>
        <end position="53"/>
    </location>
</feature>
<feature type="compositionally biased region" description="Polar residues" evidence="5">
    <location>
        <begin position="84"/>
        <end position="98"/>
    </location>
</feature>
<feature type="compositionally biased region" description="Basic and acidic residues" evidence="5">
    <location>
        <begin position="99"/>
        <end position="121"/>
    </location>
</feature>
<feature type="compositionally biased region" description="Acidic residues" evidence="5">
    <location>
        <begin position="166"/>
        <end position="197"/>
    </location>
</feature>
<feature type="compositionally biased region" description="Polar residues" evidence="5">
    <location>
        <begin position="249"/>
        <end position="268"/>
    </location>
</feature>
<feature type="compositionally biased region" description="Low complexity" evidence="5">
    <location>
        <begin position="269"/>
        <end position="280"/>
    </location>
</feature>
<feature type="compositionally biased region" description="Acidic residues" evidence="5">
    <location>
        <begin position="620"/>
        <end position="643"/>
    </location>
</feature>
<feature type="compositionally biased region" description="Basic and acidic residues" evidence="5">
    <location>
        <begin position="650"/>
        <end position="659"/>
    </location>
</feature>
<feature type="compositionally biased region" description="Acidic residues" evidence="5">
    <location>
        <begin position="705"/>
        <end position="714"/>
    </location>
</feature>
<feature type="binding site" evidence="2">
    <location>
        <begin position="372"/>
        <end position="377"/>
    </location>
    <ligand>
        <name>GTP</name>
        <dbReference type="ChEBI" id="CHEBI:37565"/>
    </ligand>
</feature>
<feature type="binding site" evidence="2">
    <location>
        <position position="376"/>
    </location>
    <ligand>
        <name>Mg(2+)</name>
        <dbReference type="ChEBI" id="CHEBI:18420"/>
    </ligand>
</feature>
<feature type="binding site" evidence="2">
    <location>
        <position position="489"/>
    </location>
    <ligand>
        <name>GTP</name>
        <dbReference type="ChEBI" id="CHEBI:37565"/>
    </ligand>
</feature>
<feature type="binding site" evidence="2">
    <location>
        <begin position="537"/>
        <end position="538"/>
    </location>
    <ligand>
        <name>GTP</name>
        <dbReference type="ChEBI" id="CHEBI:37565"/>
    </ligand>
</feature>
<dbReference type="EC" id="3.6.5.-" evidence="6"/>
<dbReference type="EMBL" id="DS545025">
    <property type="protein sequence ID" value="EDQ63891.1"/>
    <property type="molecule type" value="Genomic_DNA"/>
</dbReference>
<dbReference type="RefSeq" id="XP_001771331.1">
    <property type="nucleotide sequence ID" value="XM_001771279.1"/>
</dbReference>
<dbReference type="SMR" id="A9SY65"/>
<dbReference type="FunCoup" id="A9SY65">
    <property type="interactions" value="2521"/>
</dbReference>
<dbReference type="eggNOG" id="ENOG502QR60">
    <property type="taxonomic scope" value="Eukaryota"/>
</dbReference>
<dbReference type="HOGENOM" id="CLU_003856_0_1_1"/>
<dbReference type="InParanoid" id="A9SY65"/>
<dbReference type="Proteomes" id="UP000006727">
    <property type="component" value="Unplaced"/>
</dbReference>
<dbReference type="GO" id="GO:0009707">
    <property type="term" value="C:chloroplast outer membrane"/>
    <property type="evidence" value="ECO:0000318"/>
    <property type="project" value="GO_Central"/>
</dbReference>
<dbReference type="GO" id="GO:0005525">
    <property type="term" value="F:GTP binding"/>
    <property type="evidence" value="ECO:0007669"/>
    <property type="project" value="UniProtKB-KW"/>
</dbReference>
<dbReference type="GO" id="GO:0003924">
    <property type="term" value="F:GTPase activity"/>
    <property type="evidence" value="ECO:0007669"/>
    <property type="project" value="InterPro"/>
</dbReference>
<dbReference type="GO" id="GO:0046872">
    <property type="term" value="F:metal ion binding"/>
    <property type="evidence" value="ECO:0007669"/>
    <property type="project" value="UniProtKB-KW"/>
</dbReference>
<dbReference type="GO" id="GO:0045036">
    <property type="term" value="P:protein targeting to chloroplast"/>
    <property type="evidence" value="ECO:0000318"/>
    <property type="project" value="GO_Central"/>
</dbReference>
<dbReference type="GO" id="GO:0015031">
    <property type="term" value="P:protein transport"/>
    <property type="evidence" value="ECO:0007669"/>
    <property type="project" value="UniProtKB-KW"/>
</dbReference>
<dbReference type="CDD" id="cd01853">
    <property type="entry name" value="Toc34_like"/>
    <property type="match status" value="1"/>
</dbReference>
<dbReference type="FunFam" id="3.40.50.300:FF:000413">
    <property type="entry name" value="Translocase of chloroplast 120, chloroplastic"/>
    <property type="match status" value="1"/>
</dbReference>
<dbReference type="Gene3D" id="3.40.50.300">
    <property type="entry name" value="P-loop containing nucleotide triphosphate hydrolases"/>
    <property type="match status" value="1"/>
</dbReference>
<dbReference type="InterPro" id="IPR006703">
    <property type="entry name" value="G_AIG1"/>
</dbReference>
<dbReference type="InterPro" id="IPR045058">
    <property type="entry name" value="GIMA/IAN/Toc"/>
</dbReference>
<dbReference type="InterPro" id="IPR027417">
    <property type="entry name" value="P-loop_NTPase"/>
</dbReference>
<dbReference type="InterPro" id="IPR024283">
    <property type="entry name" value="TOC159_MAD"/>
</dbReference>
<dbReference type="InterPro" id="IPR005690">
    <property type="entry name" value="Toc86_159"/>
</dbReference>
<dbReference type="NCBIfam" id="TIGR00993">
    <property type="entry name" value="3a0901s04IAP86"/>
    <property type="match status" value="1"/>
</dbReference>
<dbReference type="PANTHER" id="PTHR10903">
    <property type="entry name" value="GTPASE, IMAP FAMILY MEMBER-RELATED"/>
    <property type="match status" value="1"/>
</dbReference>
<dbReference type="PANTHER" id="PTHR10903:SF135">
    <property type="entry name" value="TRANSLOCASE OF CHLOROPLAST 120, CHLOROPLASTIC-RELATED"/>
    <property type="match status" value="1"/>
</dbReference>
<dbReference type="Pfam" id="PF04548">
    <property type="entry name" value="AIG1"/>
    <property type="match status" value="1"/>
</dbReference>
<dbReference type="Pfam" id="PF11886">
    <property type="entry name" value="TOC159_MAD"/>
    <property type="match status" value="1"/>
</dbReference>
<dbReference type="SUPFAM" id="SSF52540">
    <property type="entry name" value="P-loop containing nucleoside triphosphate hydrolases"/>
    <property type="match status" value="1"/>
</dbReference>
<dbReference type="PROSITE" id="PS51720">
    <property type="entry name" value="G_AIG1"/>
    <property type="match status" value="1"/>
</dbReference>
<accession>A9SY65</accession>
<name>TC108_PHYPA</name>
<organism>
    <name type="scientific">Physcomitrium patens</name>
    <name type="common">Spreading-leaved earth moss</name>
    <name type="synonym">Physcomitrella patens</name>
    <dbReference type="NCBI Taxonomy" id="3218"/>
    <lineage>
        <taxon>Eukaryota</taxon>
        <taxon>Viridiplantae</taxon>
        <taxon>Streptophyta</taxon>
        <taxon>Embryophyta</taxon>
        <taxon>Bryophyta</taxon>
        <taxon>Bryophytina</taxon>
        <taxon>Bryopsida</taxon>
        <taxon>Funariidae</taxon>
        <taxon>Funariales</taxon>
        <taxon>Funariaceae</taxon>
        <taxon>Physcomitrium</taxon>
    </lineage>
</organism>
<proteinExistence type="inferred from homology"/>
<keyword id="KW-0150">Chloroplast</keyword>
<keyword id="KW-0342">GTP-binding</keyword>
<keyword id="KW-0378">Hydrolase</keyword>
<keyword id="KW-0460">Magnesium</keyword>
<keyword id="KW-0472">Membrane</keyword>
<keyword id="KW-0479">Metal-binding</keyword>
<keyword id="KW-0547">Nucleotide-binding</keyword>
<keyword id="KW-0934">Plastid</keyword>
<keyword id="KW-1002">Plastid outer membrane</keyword>
<keyword id="KW-0653">Protein transport</keyword>
<keyword id="KW-1185">Reference proteome</keyword>
<keyword id="KW-0812">Transmembrane</keyword>
<keyword id="KW-1133">Transmembrane helix</keyword>
<keyword id="KW-0813">Transport</keyword>
<reference key="1">
    <citation type="journal article" date="2008" name="Science">
        <title>The Physcomitrella genome reveals evolutionary insights into the conquest of land by plants.</title>
        <authorList>
            <person name="Rensing S.A."/>
            <person name="Lang D."/>
            <person name="Zimmer A.D."/>
            <person name="Terry A."/>
            <person name="Salamov A."/>
            <person name="Shapiro H."/>
            <person name="Nishiyama T."/>
            <person name="Perroud P.-F."/>
            <person name="Lindquist E.A."/>
            <person name="Kamisugi Y."/>
            <person name="Tanahashi T."/>
            <person name="Sakakibara K."/>
            <person name="Fujita T."/>
            <person name="Oishi K."/>
            <person name="Shin-I T."/>
            <person name="Kuroki Y."/>
            <person name="Toyoda A."/>
            <person name="Suzuki Y."/>
            <person name="Hashimoto S.-I."/>
            <person name="Yamaguchi K."/>
            <person name="Sugano S."/>
            <person name="Kohara Y."/>
            <person name="Fujiyama A."/>
            <person name="Anterola A."/>
            <person name="Aoki S."/>
            <person name="Ashton N."/>
            <person name="Barbazuk W.B."/>
            <person name="Barker E."/>
            <person name="Bennetzen J.L."/>
            <person name="Blankenship R."/>
            <person name="Cho S.H."/>
            <person name="Dutcher S.K."/>
            <person name="Estelle M."/>
            <person name="Fawcett J.A."/>
            <person name="Gundlach H."/>
            <person name="Hanada K."/>
            <person name="Heyl A."/>
            <person name="Hicks K.A."/>
            <person name="Hughes J."/>
            <person name="Lohr M."/>
            <person name="Mayer K."/>
            <person name="Melkozernov A."/>
            <person name="Murata T."/>
            <person name="Nelson D.R."/>
            <person name="Pils B."/>
            <person name="Prigge M."/>
            <person name="Reiss B."/>
            <person name="Renner T."/>
            <person name="Rombauts S."/>
            <person name="Rushton P.J."/>
            <person name="Sanderfoot A."/>
            <person name="Schween G."/>
            <person name="Shiu S.-H."/>
            <person name="Stueber K."/>
            <person name="Theodoulou F.L."/>
            <person name="Tu H."/>
            <person name="Van de Peer Y."/>
            <person name="Verrier P.J."/>
            <person name="Waters E."/>
            <person name="Wood A."/>
            <person name="Yang L."/>
            <person name="Cove D."/>
            <person name="Cuming A.C."/>
            <person name="Hasebe M."/>
            <person name="Lucas S."/>
            <person name="Mishler B.D."/>
            <person name="Reski R."/>
            <person name="Grigoriev I.V."/>
            <person name="Quatrano R.S."/>
            <person name="Boore J.L."/>
        </authorList>
    </citation>
    <scope>NUCLEOTIDE SEQUENCE [LARGE SCALE GENOMIC DNA]</scope>
    <source>
        <strain>cv. Gransden 2004</strain>
    </source>
</reference>
<comment type="function">
    <text evidence="1">GTPase involved in protein precursor import into chloroplasts. Seems to recognize chloroplast-destined precursor proteins and regulate their presentation to the translocation channel through GTP hydrolysis. Probably specialized in the import of nuclear encoded non-photosynthetic preproteins from the cytoplasm to the chloroplast.</text>
</comment>
<comment type="cofactor">
    <cofactor evidence="2">
        <name>Mg(2+)</name>
        <dbReference type="ChEBI" id="CHEBI:18420"/>
    </cofactor>
    <text evidence="2">Binds 1 Mg(2+) ion by subunit.</text>
</comment>
<comment type="subunit">
    <text evidence="1">Part of the TOC core complex.</text>
</comment>
<comment type="subcellular location">
    <subcellularLocation>
        <location evidence="6">Plastid</location>
        <location evidence="6">Chloroplast outer membrane</location>
        <topology evidence="3">Single-pass membrane protein</topology>
    </subcellularLocation>
</comment>
<comment type="similarity">
    <text evidence="6">Belongs to the TRAFAC class TrmE-Era-EngA-EngB-Septin-like GTPase superfamily. AIG1/Toc34/Toc159-like paraseptin GTPase family. TOC159 subfamily.</text>
</comment>
<gene>
    <name evidence="6" type="primary">TOC108</name>
    <name evidence="7" type="ORF">PHYPADRAFT_189669</name>
</gene>
<protein>
    <recommendedName>
        <fullName evidence="6">Translocase of chloroplast 108, chloroplastic</fullName>
        <ecNumber evidence="6">3.6.5.-</ecNumber>
    </recommendedName>
    <alternativeName>
        <fullName evidence="6">108 kDa chloroplast outer envelope protein</fullName>
    </alternativeName>
</protein>